<organism>
    <name type="scientific">Gallus gallus</name>
    <name type="common">Chicken</name>
    <dbReference type="NCBI Taxonomy" id="9031"/>
    <lineage>
        <taxon>Eukaryota</taxon>
        <taxon>Metazoa</taxon>
        <taxon>Chordata</taxon>
        <taxon>Craniata</taxon>
        <taxon>Vertebrata</taxon>
        <taxon>Euteleostomi</taxon>
        <taxon>Archelosauria</taxon>
        <taxon>Archosauria</taxon>
        <taxon>Dinosauria</taxon>
        <taxon>Saurischia</taxon>
        <taxon>Theropoda</taxon>
        <taxon>Coelurosauria</taxon>
        <taxon>Aves</taxon>
        <taxon>Neognathae</taxon>
        <taxon>Galloanserae</taxon>
        <taxon>Galliformes</taxon>
        <taxon>Phasianidae</taxon>
        <taxon>Phasianinae</taxon>
        <taxon>Gallus</taxon>
    </lineage>
</organism>
<evidence type="ECO:0000250" key="1">
    <source>
        <dbReference type="UniProtKB" id="P09065"/>
    </source>
</evidence>
<evidence type="ECO:0000255" key="2">
    <source>
        <dbReference type="PROSITE-ProRule" id="PRU00108"/>
    </source>
</evidence>
<evidence type="ECO:0000256" key="3">
    <source>
        <dbReference type="SAM" id="MobiDB-lite"/>
    </source>
</evidence>
<evidence type="ECO:0000305" key="4"/>
<sequence>MEEPPEGHGHHRDAAPPGPANGGGGGGGGSDGDSAPVSPSPAPASPAAPCPLPLPRRRPPPPPPPRTTNFFIDNILRPDFGCKKEPPAATGAATGAGGGGGGGGREQRDGAQSAGRENVNPLLARPPHAPSSALLCPDSNCAPDGSAPAGTAAKANPGTAAGAAGAAGAAKAQGDGGETPAAKYGEHGSPAILLMGSNNGGAVLKPDSQQPLVWPAWVYCTRYSDRPSSPRTRKLKKKKTEKEDKRPRTAFTAEQLQRLKAEFQANRYITEQRRQSLAQELSLNESRVKIWFQNKRAKIKKATGIKNGLALHLMAQGLYNHSTTTVQDKEESE</sequence>
<feature type="chain" id="PRO_0000196064" description="Homeobox protein engrailed-1">
    <location>
        <begin position="1"/>
        <end position="333"/>
    </location>
</feature>
<feature type="DNA-binding region" description="Homeobox" evidence="2">
    <location>
        <begin position="244"/>
        <end position="303"/>
    </location>
</feature>
<feature type="region of interest" description="Disordered" evidence="3">
    <location>
        <begin position="1"/>
        <end position="184"/>
    </location>
</feature>
<feature type="region of interest" description="Disordered" evidence="3">
    <location>
        <begin position="226"/>
        <end position="247"/>
    </location>
</feature>
<feature type="compositionally biased region" description="Basic and acidic residues" evidence="3">
    <location>
        <begin position="1"/>
        <end position="14"/>
    </location>
</feature>
<feature type="compositionally biased region" description="Gly residues" evidence="3">
    <location>
        <begin position="20"/>
        <end position="31"/>
    </location>
</feature>
<feature type="compositionally biased region" description="Pro residues" evidence="3">
    <location>
        <begin position="38"/>
        <end position="66"/>
    </location>
</feature>
<feature type="compositionally biased region" description="Gly residues" evidence="3">
    <location>
        <begin position="94"/>
        <end position="104"/>
    </location>
</feature>
<feature type="compositionally biased region" description="Low complexity" evidence="3">
    <location>
        <begin position="144"/>
        <end position="173"/>
    </location>
</feature>
<reference key="1">
    <citation type="journal article" date="1992" name="Dev. Genet.">
        <title>Cloning and sequence comparison of the mouse, human, and chicken engrailed genes reveal potential functional domains and regulatory regions.</title>
        <authorList>
            <person name="Logan C."/>
            <person name="Hanks M.C."/>
            <person name="Noble-Topham S."/>
            <person name="Nallainathan D."/>
            <person name="Provart N.J."/>
            <person name="Joyner A.L."/>
        </authorList>
    </citation>
    <scope>NUCLEOTIDE SEQUENCE [GENOMIC DNA]</scope>
</reference>
<proteinExistence type="inferred from homology"/>
<name>HME1_CHICK</name>
<dbReference type="EMBL" id="L12694">
    <property type="protein sequence ID" value="AAA53435.1"/>
    <property type="molecule type" value="Genomic_DNA"/>
</dbReference>
<dbReference type="EMBL" id="L12695">
    <property type="protein sequence ID" value="AAA53436.1"/>
    <property type="molecule type" value="Genomic_DNA"/>
</dbReference>
<dbReference type="PIR" id="C48423">
    <property type="entry name" value="C48423"/>
</dbReference>
<dbReference type="SMR" id="Q05916"/>
<dbReference type="FunCoup" id="Q05916">
    <property type="interactions" value="5"/>
</dbReference>
<dbReference type="STRING" id="9031.ENSGALP00000052689"/>
<dbReference type="PaxDb" id="9031-ENSGALP00000041310"/>
<dbReference type="VEuPathDB" id="HostDB:geneid_771008"/>
<dbReference type="eggNOG" id="KOG0493">
    <property type="taxonomic scope" value="Eukaryota"/>
</dbReference>
<dbReference type="InParanoid" id="Q05916"/>
<dbReference type="OrthoDB" id="6159439at2759"/>
<dbReference type="PhylomeDB" id="Q05916"/>
<dbReference type="Proteomes" id="UP000000539">
    <property type="component" value="Unassembled WGS sequence"/>
</dbReference>
<dbReference type="GO" id="GO:0005634">
    <property type="term" value="C:nucleus"/>
    <property type="evidence" value="ECO:0000318"/>
    <property type="project" value="GO_Central"/>
</dbReference>
<dbReference type="GO" id="GO:0000981">
    <property type="term" value="F:DNA-binding transcription factor activity, RNA polymerase II-specific"/>
    <property type="evidence" value="ECO:0000318"/>
    <property type="project" value="GO_Central"/>
</dbReference>
<dbReference type="GO" id="GO:0000978">
    <property type="term" value="F:RNA polymerase II cis-regulatory region sequence-specific DNA binding"/>
    <property type="evidence" value="ECO:0000318"/>
    <property type="project" value="GO_Central"/>
</dbReference>
<dbReference type="GO" id="GO:0006357">
    <property type="term" value="P:regulation of transcription by RNA polymerase II"/>
    <property type="evidence" value="ECO:0000318"/>
    <property type="project" value="GO_Central"/>
</dbReference>
<dbReference type="CDD" id="cd00086">
    <property type="entry name" value="homeodomain"/>
    <property type="match status" value="1"/>
</dbReference>
<dbReference type="FunFam" id="1.10.10.60:FF:000189">
    <property type="entry name" value="Homeobox protein engrailed-like"/>
    <property type="match status" value="1"/>
</dbReference>
<dbReference type="Gene3D" id="1.10.10.60">
    <property type="entry name" value="Homeodomain-like"/>
    <property type="match status" value="1"/>
</dbReference>
<dbReference type="InterPro" id="IPR050720">
    <property type="entry name" value="Engrailed_Homeobox_TFs"/>
</dbReference>
<dbReference type="InterPro" id="IPR001356">
    <property type="entry name" value="HD"/>
</dbReference>
<dbReference type="InterPro" id="IPR000747">
    <property type="entry name" value="HD_engrailed"/>
</dbReference>
<dbReference type="InterPro" id="IPR020479">
    <property type="entry name" value="HD_metazoa"/>
</dbReference>
<dbReference type="InterPro" id="IPR019549">
    <property type="entry name" value="Homeobox-engrailed_C-terminal"/>
</dbReference>
<dbReference type="InterPro" id="IPR019737">
    <property type="entry name" value="Homeobox-engrailed_CS"/>
</dbReference>
<dbReference type="InterPro" id="IPR017970">
    <property type="entry name" value="Homeobox_CS"/>
</dbReference>
<dbReference type="InterPro" id="IPR009057">
    <property type="entry name" value="Homeodomain-like_sf"/>
</dbReference>
<dbReference type="PANTHER" id="PTHR24341">
    <property type="entry name" value="HOMEOBOX PROTEIN ENGRAILED"/>
    <property type="match status" value="1"/>
</dbReference>
<dbReference type="PANTHER" id="PTHR24341:SF4">
    <property type="entry name" value="HOMEOBOX PROTEIN ENGRAILED-1"/>
    <property type="match status" value="1"/>
</dbReference>
<dbReference type="Pfam" id="PF10525">
    <property type="entry name" value="Engrail_1_C_sig"/>
    <property type="match status" value="1"/>
</dbReference>
<dbReference type="Pfam" id="PF00046">
    <property type="entry name" value="Homeodomain"/>
    <property type="match status" value="1"/>
</dbReference>
<dbReference type="PRINTS" id="PR00026">
    <property type="entry name" value="ENGRAILED"/>
</dbReference>
<dbReference type="PRINTS" id="PR00024">
    <property type="entry name" value="HOMEOBOX"/>
</dbReference>
<dbReference type="SMART" id="SM00389">
    <property type="entry name" value="HOX"/>
    <property type="match status" value="1"/>
</dbReference>
<dbReference type="SUPFAM" id="SSF46689">
    <property type="entry name" value="Homeodomain-like"/>
    <property type="match status" value="1"/>
</dbReference>
<dbReference type="PROSITE" id="PS00033">
    <property type="entry name" value="ENGRAILED"/>
    <property type="match status" value="1"/>
</dbReference>
<dbReference type="PROSITE" id="PS00027">
    <property type="entry name" value="HOMEOBOX_1"/>
    <property type="match status" value="1"/>
</dbReference>
<dbReference type="PROSITE" id="PS50071">
    <property type="entry name" value="HOMEOBOX_2"/>
    <property type="match status" value="1"/>
</dbReference>
<gene>
    <name type="primary">EN1</name>
    <name type="synonym">EN-1</name>
</gene>
<protein>
    <recommendedName>
        <fullName>Homeobox protein engrailed-1</fullName>
        <shortName>Gg-En-1</shortName>
        <shortName>Homeobox protein en-1</shortName>
    </recommendedName>
</protein>
<keyword id="KW-0217">Developmental protein</keyword>
<keyword id="KW-0238">DNA-binding</keyword>
<keyword id="KW-0371">Homeobox</keyword>
<keyword id="KW-0539">Nucleus</keyword>
<keyword id="KW-1185">Reference proteome</keyword>
<accession>Q05916</accession>
<comment type="function">
    <text evidence="1">Required for proper formation of the apical ectodermal ridge and correct dorsal-ventral patterning in the limb.</text>
</comment>
<comment type="subcellular location">
    <subcellularLocation>
        <location>Nucleus</location>
    </subcellularLocation>
</comment>
<comment type="similarity">
    <text evidence="4">Belongs to the engrailed homeobox family.</text>
</comment>